<name>RL27_MESFL</name>
<dbReference type="EMBL" id="AE017263">
    <property type="protein sequence ID" value="AAT75798.1"/>
    <property type="molecule type" value="Genomic_DNA"/>
</dbReference>
<dbReference type="RefSeq" id="WP_011183338.1">
    <property type="nucleotide sequence ID" value="NC_006055.1"/>
</dbReference>
<dbReference type="RefSeq" id="YP_053682.1">
    <property type="nucleotide sequence ID" value="NC_006055.1"/>
</dbReference>
<dbReference type="SMR" id="Q6F125"/>
<dbReference type="STRING" id="265311.Mfl439"/>
<dbReference type="PaxDb" id="265311-Mfl439"/>
<dbReference type="EnsemblBacteria" id="AAT75798">
    <property type="protein sequence ID" value="AAT75798"/>
    <property type="gene ID" value="Mfl439"/>
</dbReference>
<dbReference type="GeneID" id="2897929"/>
<dbReference type="KEGG" id="mfl:Mfl439"/>
<dbReference type="PATRIC" id="fig|265311.5.peg.440"/>
<dbReference type="eggNOG" id="COG0211">
    <property type="taxonomic scope" value="Bacteria"/>
</dbReference>
<dbReference type="HOGENOM" id="CLU_095424_4_0_14"/>
<dbReference type="OrthoDB" id="9803474at2"/>
<dbReference type="Proteomes" id="UP000006647">
    <property type="component" value="Chromosome"/>
</dbReference>
<dbReference type="GO" id="GO:0022625">
    <property type="term" value="C:cytosolic large ribosomal subunit"/>
    <property type="evidence" value="ECO:0007669"/>
    <property type="project" value="TreeGrafter"/>
</dbReference>
<dbReference type="GO" id="GO:0003735">
    <property type="term" value="F:structural constituent of ribosome"/>
    <property type="evidence" value="ECO:0007669"/>
    <property type="project" value="InterPro"/>
</dbReference>
<dbReference type="GO" id="GO:0006412">
    <property type="term" value="P:translation"/>
    <property type="evidence" value="ECO:0007669"/>
    <property type="project" value="UniProtKB-UniRule"/>
</dbReference>
<dbReference type="FunFam" id="2.40.50.100:FF:000004">
    <property type="entry name" value="50S ribosomal protein L27"/>
    <property type="match status" value="1"/>
</dbReference>
<dbReference type="Gene3D" id="2.40.50.100">
    <property type="match status" value="1"/>
</dbReference>
<dbReference type="HAMAP" id="MF_00539">
    <property type="entry name" value="Ribosomal_bL27"/>
    <property type="match status" value="1"/>
</dbReference>
<dbReference type="InterPro" id="IPR001684">
    <property type="entry name" value="Ribosomal_bL27"/>
</dbReference>
<dbReference type="InterPro" id="IPR018261">
    <property type="entry name" value="Ribosomal_bL27_CS"/>
</dbReference>
<dbReference type="NCBIfam" id="TIGR00062">
    <property type="entry name" value="L27"/>
    <property type="match status" value="1"/>
</dbReference>
<dbReference type="PANTHER" id="PTHR15893:SF0">
    <property type="entry name" value="LARGE RIBOSOMAL SUBUNIT PROTEIN BL27M"/>
    <property type="match status" value="1"/>
</dbReference>
<dbReference type="PANTHER" id="PTHR15893">
    <property type="entry name" value="RIBOSOMAL PROTEIN L27"/>
    <property type="match status" value="1"/>
</dbReference>
<dbReference type="Pfam" id="PF01016">
    <property type="entry name" value="Ribosomal_L27"/>
    <property type="match status" value="1"/>
</dbReference>
<dbReference type="PRINTS" id="PR00063">
    <property type="entry name" value="RIBOSOMALL27"/>
</dbReference>
<dbReference type="SUPFAM" id="SSF110324">
    <property type="entry name" value="Ribosomal L27 protein-like"/>
    <property type="match status" value="1"/>
</dbReference>
<dbReference type="PROSITE" id="PS00831">
    <property type="entry name" value="RIBOSOMAL_L27"/>
    <property type="match status" value="1"/>
</dbReference>
<evidence type="ECO:0000250" key="1">
    <source>
        <dbReference type="UniProtKB" id="Q2FXT0"/>
    </source>
</evidence>
<evidence type="ECO:0000255" key="2">
    <source>
        <dbReference type="HAMAP-Rule" id="MF_00539"/>
    </source>
</evidence>
<evidence type="ECO:0000305" key="3"/>
<reference key="1">
    <citation type="submission" date="2004-06" db="EMBL/GenBank/DDBJ databases">
        <authorList>
            <person name="Birren B.W."/>
            <person name="Stange-Thomann N."/>
            <person name="Hafez N."/>
            <person name="DeCaprio D."/>
            <person name="Fisher S."/>
            <person name="Butler J."/>
            <person name="Elkins T."/>
            <person name="Kodira C.D."/>
            <person name="Major J."/>
            <person name="Wang S."/>
            <person name="Nicol R."/>
            <person name="Nusbaum C."/>
        </authorList>
    </citation>
    <scope>NUCLEOTIDE SEQUENCE [LARGE SCALE GENOMIC DNA]</scope>
    <source>
        <strain>ATCC 33453 / NBRC 100688 / NCTC 11704 / L1</strain>
    </source>
</reference>
<accession>Q6F125</accession>
<comment type="PTM">
    <text evidence="1">The N-terminus is cleaved by ribosomal processing cysteine protease Prp.</text>
</comment>
<comment type="similarity">
    <text evidence="2">Belongs to the bacterial ribosomal protein bL27 family.</text>
</comment>
<feature type="propeptide" id="PRO_0000459914" evidence="1">
    <location>
        <begin position="1"/>
        <end position="10"/>
    </location>
</feature>
<feature type="chain" id="PRO_0000181117" description="Large ribosomal subunit protein bL27">
    <location>
        <begin position="11"/>
        <end position="95"/>
    </location>
</feature>
<keyword id="KW-1185">Reference proteome</keyword>
<keyword id="KW-0687">Ribonucleoprotein</keyword>
<keyword id="KW-0689">Ribosomal protein</keyword>
<gene>
    <name evidence="2" type="primary">rpmA</name>
    <name type="ordered locus">Mfl439</name>
</gene>
<sequence>MRFILNLQFFASKKGVGSTKNGRDSESKRLGAKKADGQFANAGSIIFRQRGTKIHPGQNVGRGGDDTLFALVSGIVKYEKFGKGRTRVKVVAPAE</sequence>
<proteinExistence type="inferred from homology"/>
<protein>
    <recommendedName>
        <fullName evidence="2">Large ribosomal subunit protein bL27</fullName>
    </recommendedName>
    <alternativeName>
        <fullName evidence="3">50S ribosomal protein L27</fullName>
    </alternativeName>
</protein>
<organism>
    <name type="scientific">Mesoplasma florum (strain ATCC 33453 / NBRC 100688 / NCTC 11704 / L1)</name>
    <name type="common">Acholeplasma florum</name>
    <dbReference type="NCBI Taxonomy" id="265311"/>
    <lineage>
        <taxon>Bacteria</taxon>
        <taxon>Bacillati</taxon>
        <taxon>Mycoplasmatota</taxon>
        <taxon>Mollicutes</taxon>
        <taxon>Entomoplasmatales</taxon>
        <taxon>Entomoplasmataceae</taxon>
        <taxon>Mesoplasma</taxon>
    </lineage>
</organism>